<feature type="chain" id="PRO_1000136228" description="L-carnitine/gamma-butyrobetaine antiporter">
    <location>
        <begin position="1"/>
        <end position="504"/>
    </location>
</feature>
<feature type="transmembrane region" description="Helical" evidence="1">
    <location>
        <begin position="10"/>
        <end position="30"/>
    </location>
</feature>
<feature type="transmembrane region" description="Helical" evidence="1">
    <location>
        <begin position="51"/>
        <end position="71"/>
    </location>
</feature>
<feature type="transmembrane region" description="Helical" evidence="1">
    <location>
        <begin position="92"/>
        <end position="112"/>
    </location>
</feature>
<feature type="transmembrane region" description="Helical" evidence="1">
    <location>
        <begin position="143"/>
        <end position="163"/>
    </location>
</feature>
<feature type="transmembrane region" description="Helical" evidence="1">
    <location>
        <begin position="195"/>
        <end position="215"/>
    </location>
</feature>
<feature type="transmembrane region" description="Helical" evidence="1">
    <location>
        <begin position="231"/>
        <end position="251"/>
    </location>
</feature>
<feature type="transmembrane region" description="Helical" evidence="1">
    <location>
        <begin position="263"/>
        <end position="283"/>
    </location>
</feature>
<feature type="transmembrane region" description="Helical" evidence="1">
    <location>
        <begin position="316"/>
        <end position="336"/>
    </location>
</feature>
<feature type="transmembrane region" description="Helical" evidence="1">
    <location>
        <begin position="347"/>
        <end position="367"/>
    </location>
</feature>
<feature type="transmembrane region" description="Helical" evidence="1">
    <location>
        <begin position="398"/>
        <end position="418"/>
    </location>
</feature>
<feature type="transmembrane region" description="Helical" evidence="1">
    <location>
        <begin position="446"/>
        <end position="466"/>
    </location>
</feature>
<feature type="transmembrane region" description="Helical" evidence="1">
    <location>
        <begin position="475"/>
        <end position="495"/>
    </location>
</feature>
<organism>
    <name type="scientific">Escherichia coli O45:K1 (strain S88 / ExPEC)</name>
    <dbReference type="NCBI Taxonomy" id="585035"/>
    <lineage>
        <taxon>Bacteria</taxon>
        <taxon>Pseudomonadati</taxon>
        <taxon>Pseudomonadota</taxon>
        <taxon>Gammaproteobacteria</taxon>
        <taxon>Enterobacterales</taxon>
        <taxon>Enterobacteriaceae</taxon>
        <taxon>Escherichia</taxon>
    </lineage>
</organism>
<protein>
    <recommendedName>
        <fullName evidence="1">L-carnitine/gamma-butyrobetaine antiporter</fullName>
    </recommendedName>
</protein>
<evidence type="ECO:0000255" key="1">
    <source>
        <dbReference type="HAMAP-Rule" id="MF_01049"/>
    </source>
</evidence>
<keyword id="KW-0050">Antiport</keyword>
<keyword id="KW-0997">Cell inner membrane</keyword>
<keyword id="KW-1003">Cell membrane</keyword>
<keyword id="KW-0472">Membrane</keyword>
<keyword id="KW-1185">Reference proteome</keyword>
<keyword id="KW-0812">Transmembrane</keyword>
<keyword id="KW-1133">Transmembrane helix</keyword>
<keyword id="KW-0813">Transport</keyword>
<proteinExistence type="inferred from homology"/>
<sequence>MKNEKRKTGIEPKVFFPPLIIVGILCWLTVRDLDAANVVINAVFSYVTNVWGWAFEWYMVVMLFGWFWLVFGPYAKKRLGNEPPEFSTASWIFMMFASCTSAAVLFWGSIEIYYYISTPPFGLEPNSTGAKELGLAYSLFHWGPLPWATYSFLSVAFAYFFFVRKMEVIRPSSTLVPLVGEKHAKGLFGTIVDNFYLVALIFAMGTSLGLATPLVTECMQWLFGIPHTLQLDAIIITCWIILNAICVACGLQKGVRIASDVRSYLSFLMLGWVFIVSGASFIMNYFTDSVGMLLMYLPRMLFYTDPIAKGGFPQGWTVFYWAWWVIYAIQMSIFLARISRGRTVRELCFGMVLGLTASTWILWTVLGSNTLLLIDKNIINIPNLIEQYGVARAIIETWAALPLSTATMWGFFILCFIATVTLVNACSYTLAMSTCREVRDGEEPPLLVRIGWSILVGIIGIVLLALGGLKPIQTAIIAGGCPLFFVNIMVTLSFIKDAKQNWKD</sequence>
<reference key="1">
    <citation type="journal article" date="2009" name="PLoS Genet.">
        <title>Organised genome dynamics in the Escherichia coli species results in highly diverse adaptive paths.</title>
        <authorList>
            <person name="Touchon M."/>
            <person name="Hoede C."/>
            <person name="Tenaillon O."/>
            <person name="Barbe V."/>
            <person name="Baeriswyl S."/>
            <person name="Bidet P."/>
            <person name="Bingen E."/>
            <person name="Bonacorsi S."/>
            <person name="Bouchier C."/>
            <person name="Bouvet O."/>
            <person name="Calteau A."/>
            <person name="Chiapello H."/>
            <person name="Clermont O."/>
            <person name="Cruveiller S."/>
            <person name="Danchin A."/>
            <person name="Diard M."/>
            <person name="Dossat C."/>
            <person name="Karoui M.E."/>
            <person name="Frapy E."/>
            <person name="Garry L."/>
            <person name="Ghigo J.M."/>
            <person name="Gilles A.M."/>
            <person name="Johnson J."/>
            <person name="Le Bouguenec C."/>
            <person name="Lescat M."/>
            <person name="Mangenot S."/>
            <person name="Martinez-Jehanne V."/>
            <person name="Matic I."/>
            <person name="Nassif X."/>
            <person name="Oztas S."/>
            <person name="Petit M.A."/>
            <person name="Pichon C."/>
            <person name="Rouy Z."/>
            <person name="Ruf C.S."/>
            <person name="Schneider D."/>
            <person name="Tourret J."/>
            <person name="Vacherie B."/>
            <person name="Vallenet D."/>
            <person name="Medigue C."/>
            <person name="Rocha E.P.C."/>
            <person name="Denamur E."/>
        </authorList>
    </citation>
    <scope>NUCLEOTIDE SEQUENCE [LARGE SCALE GENOMIC DNA]</scope>
    <source>
        <strain>S88 / ExPEC</strain>
    </source>
</reference>
<name>CAIT_ECO45</name>
<comment type="function">
    <text evidence="1">Catalyzes the exchange of L-carnitine for gamma-butyrobetaine.</text>
</comment>
<comment type="catalytic activity">
    <reaction evidence="1">
        <text>4-(trimethylamino)butanoate(in) + (R)-carnitine(out) = 4-(trimethylamino)butanoate(out) + (R)-carnitine(in)</text>
        <dbReference type="Rhea" id="RHEA:29427"/>
        <dbReference type="ChEBI" id="CHEBI:16244"/>
        <dbReference type="ChEBI" id="CHEBI:16347"/>
    </reaction>
</comment>
<comment type="pathway">
    <text evidence="1">Amine and polyamine metabolism; carnitine metabolism.</text>
</comment>
<comment type="subunit">
    <text evidence="1">Homotrimer.</text>
</comment>
<comment type="subcellular location">
    <subcellularLocation>
        <location evidence="1">Cell inner membrane</location>
        <topology evidence="1">Multi-pass membrane protein</topology>
    </subcellularLocation>
</comment>
<comment type="similarity">
    <text evidence="1">Belongs to the BCCT transporter (TC 2.A.15) family. CaiT subfamily.</text>
</comment>
<accession>B7MAG3</accession>
<gene>
    <name evidence="1" type="primary">caiT</name>
    <name type="ordered locus">ECS88_0043</name>
</gene>
<dbReference type="EMBL" id="CU928161">
    <property type="protein sequence ID" value="CAR01409.1"/>
    <property type="molecule type" value="Genomic_DNA"/>
</dbReference>
<dbReference type="RefSeq" id="WP_000787103.1">
    <property type="nucleotide sequence ID" value="NC_011742.1"/>
</dbReference>
<dbReference type="SMR" id="B7MAG3"/>
<dbReference type="GeneID" id="93777395"/>
<dbReference type="KEGG" id="ecz:ECS88_0043"/>
<dbReference type="HOGENOM" id="CLU_010118_6_0_6"/>
<dbReference type="UniPathway" id="UPA00117"/>
<dbReference type="Proteomes" id="UP000000747">
    <property type="component" value="Chromosome"/>
</dbReference>
<dbReference type="GO" id="GO:0005886">
    <property type="term" value="C:plasma membrane"/>
    <property type="evidence" value="ECO:0007669"/>
    <property type="project" value="UniProtKB-SubCell"/>
</dbReference>
<dbReference type="GO" id="GO:0044667">
    <property type="term" value="F:(R)-carnitine:4-(trimethylammonio)butanoate antiporter activity"/>
    <property type="evidence" value="ECO:0007669"/>
    <property type="project" value="UniProtKB-UniRule"/>
</dbReference>
<dbReference type="GO" id="GO:1900751">
    <property type="term" value="P:4-(trimethylammonio)butanoate transport"/>
    <property type="evidence" value="ECO:0007669"/>
    <property type="project" value="InterPro"/>
</dbReference>
<dbReference type="GO" id="GO:0009437">
    <property type="term" value="P:carnitine metabolic process"/>
    <property type="evidence" value="ECO:0007669"/>
    <property type="project" value="UniProtKB-UniRule"/>
</dbReference>
<dbReference type="HAMAP" id="MF_01049">
    <property type="entry name" value="CaiT"/>
    <property type="match status" value="1"/>
</dbReference>
<dbReference type="InterPro" id="IPR018093">
    <property type="entry name" value="BCCT_CS"/>
</dbReference>
<dbReference type="InterPro" id="IPR000060">
    <property type="entry name" value="BCCT_transptr"/>
</dbReference>
<dbReference type="InterPro" id="IPR023449">
    <property type="entry name" value="BCCT_transptr_CaiT"/>
</dbReference>
<dbReference type="NCBIfam" id="TIGR00842">
    <property type="entry name" value="bcct"/>
    <property type="match status" value="1"/>
</dbReference>
<dbReference type="NCBIfam" id="NF002887">
    <property type="entry name" value="PRK03356.1"/>
    <property type="match status" value="1"/>
</dbReference>
<dbReference type="PANTHER" id="PTHR30047">
    <property type="entry name" value="HIGH-AFFINITY CHOLINE TRANSPORT PROTEIN-RELATED"/>
    <property type="match status" value="1"/>
</dbReference>
<dbReference type="PANTHER" id="PTHR30047:SF11">
    <property type="entry name" value="L-CARNITINE_GAMMA-BUTYROBETAINE ANTIPORTER"/>
    <property type="match status" value="1"/>
</dbReference>
<dbReference type="Pfam" id="PF02028">
    <property type="entry name" value="BCCT"/>
    <property type="match status" value="1"/>
</dbReference>
<dbReference type="PROSITE" id="PS01303">
    <property type="entry name" value="BCCT"/>
    <property type="match status" value="1"/>
</dbReference>